<name>RUVA_CHLTE</name>
<gene>
    <name evidence="1" type="primary">ruvA</name>
    <name type="ordered locus">CT0262</name>
</gene>
<proteinExistence type="inferred from homology"/>
<keyword id="KW-0963">Cytoplasm</keyword>
<keyword id="KW-0227">DNA damage</keyword>
<keyword id="KW-0233">DNA recombination</keyword>
<keyword id="KW-0234">DNA repair</keyword>
<keyword id="KW-0238">DNA-binding</keyword>
<keyword id="KW-1185">Reference proteome</keyword>
<accession>Q8KFR0</accession>
<reference key="1">
    <citation type="journal article" date="2002" name="Proc. Natl. Acad. Sci. U.S.A.">
        <title>The complete genome sequence of Chlorobium tepidum TLS, a photosynthetic, anaerobic, green-sulfur bacterium.</title>
        <authorList>
            <person name="Eisen J.A."/>
            <person name="Nelson K.E."/>
            <person name="Paulsen I.T."/>
            <person name="Heidelberg J.F."/>
            <person name="Wu M."/>
            <person name="Dodson R.J."/>
            <person name="DeBoy R.T."/>
            <person name="Gwinn M.L."/>
            <person name="Nelson W.C."/>
            <person name="Haft D.H."/>
            <person name="Hickey E.K."/>
            <person name="Peterson J.D."/>
            <person name="Durkin A.S."/>
            <person name="Kolonay J.F."/>
            <person name="Yang F."/>
            <person name="Holt I.E."/>
            <person name="Umayam L.A."/>
            <person name="Mason T.M."/>
            <person name="Brenner M."/>
            <person name="Shea T.P."/>
            <person name="Parksey D.S."/>
            <person name="Nierman W.C."/>
            <person name="Feldblyum T.V."/>
            <person name="Hansen C.L."/>
            <person name="Craven M.B."/>
            <person name="Radune D."/>
            <person name="Vamathevan J.J."/>
            <person name="Khouri H.M."/>
            <person name="White O."/>
            <person name="Gruber T.M."/>
            <person name="Ketchum K.A."/>
            <person name="Venter J.C."/>
            <person name="Tettelin H."/>
            <person name="Bryant D.A."/>
            <person name="Fraser C.M."/>
        </authorList>
    </citation>
    <scope>NUCLEOTIDE SEQUENCE [LARGE SCALE GENOMIC DNA]</scope>
    <source>
        <strain>ATCC 49652 / DSM 12025 / NBRC 103806 / TLS</strain>
    </source>
</reference>
<organism>
    <name type="scientific">Chlorobaculum tepidum (strain ATCC 49652 / DSM 12025 / NBRC 103806 / TLS)</name>
    <name type="common">Chlorobium tepidum</name>
    <dbReference type="NCBI Taxonomy" id="194439"/>
    <lineage>
        <taxon>Bacteria</taxon>
        <taxon>Pseudomonadati</taxon>
        <taxon>Chlorobiota</taxon>
        <taxon>Chlorobiia</taxon>
        <taxon>Chlorobiales</taxon>
        <taxon>Chlorobiaceae</taxon>
        <taxon>Chlorobaculum</taxon>
    </lineage>
</organism>
<sequence>MFAFLRGELVTVSREEAVVEVSGIGYLLHISSGTSRRLPPEGSQVRLFTHHYVREDAQQLFGFLDEEELQLFRLLLTIGGVGPKLAMAVLSGLSVGEIQEAIVANRPETLYGITGVGKKTASRIILELRDKILKIQPAASGKTAGAPQALQLNEDALAALMTLGFPKPAAQKAISGILETSPGLSVEEVVRAALIAIHNNF</sequence>
<evidence type="ECO:0000255" key="1">
    <source>
        <dbReference type="HAMAP-Rule" id="MF_00031"/>
    </source>
</evidence>
<comment type="function">
    <text evidence="1">The RuvA-RuvB-RuvC complex processes Holliday junction (HJ) DNA during genetic recombination and DNA repair, while the RuvA-RuvB complex plays an important role in the rescue of blocked DNA replication forks via replication fork reversal (RFR). RuvA specifically binds to HJ cruciform DNA, conferring on it an open structure. The RuvB hexamer acts as an ATP-dependent pump, pulling dsDNA into and through the RuvAB complex. HJ branch migration allows RuvC to scan DNA until it finds its consensus sequence, where it cleaves and resolves the cruciform DNA.</text>
</comment>
<comment type="subunit">
    <text evidence="1">Homotetramer. Forms an RuvA(8)-RuvB(12)-Holliday junction (HJ) complex. HJ DNA is sandwiched between 2 RuvA tetramers; dsDNA enters through RuvA and exits via RuvB. An RuvB hexamer assembles on each DNA strand where it exits the tetramer. Each RuvB hexamer is contacted by two RuvA subunits (via domain III) on 2 adjacent RuvB subunits; this complex drives branch migration. In the full resolvosome a probable DNA-RuvA(4)-RuvB(12)-RuvC(2) complex forms which resolves the HJ.</text>
</comment>
<comment type="subcellular location">
    <subcellularLocation>
        <location evidence="1">Cytoplasm</location>
    </subcellularLocation>
</comment>
<comment type="domain">
    <text evidence="1">Has three domains with a flexible linker between the domains II and III and assumes an 'L' shape. Domain III is highly mobile and contacts RuvB.</text>
</comment>
<comment type="similarity">
    <text evidence="1">Belongs to the RuvA family.</text>
</comment>
<protein>
    <recommendedName>
        <fullName evidence="1">Holliday junction branch migration complex subunit RuvA</fullName>
    </recommendedName>
</protein>
<feature type="chain" id="PRO_0000094618" description="Holliday junction branch migration complex subunit RuvA">
    <location>
        <begin position="1"/>
        <end position="201"/>
    </location>
</feature>
<feature type="region of interest" description="Domain I" evidence="1">
    <location>
        <begin position="1"/>
        <end position="64"/>
    </location>
</feature>
<feature type="region of interest" description="Domain II" evidence="1">
    <location>
        <begin position="65"/>
        <end position="143"/>
    </location>
</feature>
<feature type="region of interest" description="Flexible linker" evidence="1">
    <location>
        <begin position="144"/>
        <end position="154"/>
    </location>
</feature>
<feature type="region of interest" description="Domain III" evidence="1">
    <location>
        <begin position="154"/>
        <end position="201"/>
    </location>
</feature>
<dbReference type="EMBL" id="AE006470">
    <property type="protein sequence ID" value="AAM71508.1"/>
    <property type="molecule type" value="Genomic_DNA"/>
</dbReference>
<dbReference type="RefSeq" id="NP_661166.1">
    <property type="nucleotide sequence ID" value="NC_002932.3"/>
</dbReference>
<dbReference type="RefSeq" id="WP_010931954.1">
    <property type="nucleotide sequence ID" value="NC_002932.3"/>
</dbReference>
<dbReference type="SMR" id="Q8KFR0"/>
<dbReference type="STRING" id="194439.CT0262"/>
<dbReference type="EnsemblBacteria" id="AAM71508">
    <property type="protein sequence ID" value="AAM71508"/>
    <property type="gene ID" value="CT0262"/>
</dbReference>
<dbReference type="KEGG" id="cte:CT0262"/>
<dbReference type="PATRIC" id="fig|194439.7.peg.254"/>
<dbReference type="eggNOG" id="COG0632">
    <property type="taxonomic scope" value="Bacteria"/>
</dbReference>
<dbReference type="HOGENOM" id="CLU_087936_3_0_10"/>
<dbReference type="OrthoDB" id="5293449at2"/>
<dbReference type="Proteomes" id="UP000001007">
    <property type="component" value="Chromosome"/>
</dbReference>
<dbReference type="GO" id="GO:0005737">
    <property type="term" value="C:cytoplasm"/>
    <property type="evidence" value="ECO:0007669"/>
    <property type="project" value="UniProtKB-SubCell"/>
</dbReference>
<dbReference type="GO" id="GO:0009379">
    <property type="term" value="C:Holliday junction helicase complex"/>
    <property type="evidence" value="ECO:0007669"/>
    <property type="project" value="InterPro"/>
</dbReference>
<dbReference type="GO" id="GO:0048476">
    <property type="term" value="C:Holliday junction resolvase complex"/>
    <property type="evidence" value="ECO:0007669"/>
    <property type="project" value="UniProtKB-UniRule"/>
</dbReference>
<dbReference type="GO" id="GO:0005524">
    <property type="term" value="F:ATP binding"/>
    <property type="evidence" value="ECO:0007669"/>
    <property type="project" value="InterPro"/>
</dbReference>
<dbReference type="GO" id="GO:0000400">
    <property type="term" value="F:four-way junction DNA binding"/>
    <property type="evidence" value="ECO:0007669"/>
    <property type="project" value="UniProtKB-UniRule"/>
</dbReference>
<dbReference type="GO" id="GO:0009378">
    <property type="term" value="F:four-way junction helicase activity"/>
    <property type="evidence" value="ECO:0007669"/>
    <property type="project" value="InterPro"/>
</dbReference>
<dbReference type="GO" id="GO:0006310">
    <property type="term" value="P:DNA recombination"/>
    <property type="evidence" value="ECO:0007669"/>
    <property type="project" value="UniProtKB-UniRule"/>
</dbReference>
<dbReference type="GO" id="GO:0006281">
    <property type="term" value="P:DNA repair"/>
    <property type="evidence" value="ECO:0007669"/>
    <property type="project" value="UniProtKB-UniRule"/>
</dbReference>
<dbReference type="CDD" id="cd14332">
    <property type="entry name" value="UBA_RuvA_C"/>
    <property type="match status" value="1"/>
</dbReference>
<dbReference type="Gene3D" id="1.10.150.20">
    <property type="entry name" value="5' to 3' exonuclease, C-terminal subdomain"/>
    <property type="match status" value="1"/>
</dbReference>
<dbReference type="Gene3D" id="1.10.8.10">
    <property type="entry name" value="DNA helicase RuvA subunit, C-terminal domain"/>
    <property type="match status" value="1"/>
</dbReference>
<dbReference type="Gene3D" id="2.40.50.140">
    <property type="entry name" value="Nucleic acid-binding proteins"/>
    <property type="match status" value="1"/>
</dbReference>
<dbReference type="HAMAP" id="MF_00031">
    <property type="entry name" value="DNA_HJ_migration_RuvA"/>
    <property type="match status" value="1"/>
</dbReference>
<dbReference type="InterPro" id="IPR013849">
    <property type="entry name" value="DNA_helicase_Holl-junc_RuvA_I"/>
</dbReference>
<dbReference type="InterPro" id="IPR003583">
    <property type="entry name" value="Hlx-hairpin-Hlx_DNA-bd_motif"/>
</dbReference>
<dbReference type="InterPro" id="IPR012340">
    <property type="entry name" value="NA-bd_OB-fold"/>
</dbReference>
<dbReference type="InterPro" id="IPR000085">
    <property type="entry name" value="RuvA"/>
</dbReference>
<dbReference type="InterPro" id="IPR010994">
    <property type="entry name" value="RuvA_2-like"/>
</dbReference>
<dbReference type="InterPro" id="IPR011114">
    <property type="entry name" value="RuvA_C"/>
</dbReference>
<dbReference type="InterPro" id="IPR036267">
    <property type="entry name" value="RuvA_C_sf"/>
</dbReference>
<dbReference type="NCBIfam" id="TIGR00084">
    <property type="entry name" value="ruvA"/>
    <property type="match status" value="1"/>
</dbReference>
<dbReference type="Pfam" id="PF14520">
    <property type="entry name" value="HHH_5"/>
    <property type="match status" value="1"/>
</dbReference>
<dbReference type="Pfam" id="PF07499">
    <property type="entry name" value="RuvA_C"/>
    <property type="match status" value="1"/>
</dbReference>
<dbReference type="Pfam" id="PF01330">
    <property type="entry name" value="RuvA_N"/>
    <property type="match status" value="1"/>
</dbReference>
<dbReference type="SMART" id="SM00278">
    <property type="entry name" value="HhH1"/>
    <property type="match status" value="2"/>
</dbReference>
<dbReference type="SUPFAM" id="SSF46929">
    <property type="entry name" value="DNA helicase RuvA subunit, C-terminal domain"/>
    <property type="match status" value="1"/>
</dbReference>
<dbReference type="SUPFAM" id="SSF50249">
    <property type="entry name" value="Nucleic acid-binding proteins"/>
    <property type="match status" value="1"/>
</dbReference>
<dbReference type="SUPFAM" id="SSF47781">
    <property type="entry name" value="RuvA domain 2-like"/>
    <property type="match status" value="1"/>
</dbReference>